<sequence length="78" mass="9081">MPRKPVRKVASTPRPNPLDQNGITYIDYKDTDLLRKFLSDRGKIRSRRVTRVTAQQQRLLARAVKNAREMALLPYSSR</sequence>
<feature type="chain" id="PRO_0000111235" description="Small ribosomal subunit protein bS18B">
    <location>
        <begin position="1"/>
        <end position="78"/>
    </location>
</feature>
<feature type="region of interest" description="Disordered" evidence="2">
    <location>
        <begin position="1"/>
        <end position="22"/>
    </location>
</feature>
<proteinExistence type="inferred from homology"/>
<comment type="function">
    <text evidence="1">Binds as a heterodimer with protein bS6 to the central domain of the 16S rRNA, where it helps stabilize the platform of the 30S subunit.</text>
</comment>
<comment type="subunit">
    <text evidence="1">Part of the 30S ribosomal subunit. Forms a tight heterodimer with protein bS6.</text>
</comment>
<comment type="similarity">
    <text evidence="1">Belongs to the bacterial ribosomal protein bS18 family.</text>
</comment>
<gene>
    <name evidence="1" type="primary">rpsR2</name>
    <name type="ordered locus">SAV_4646</name>
</gene>
<accession>Q82EG9</accession>
<evidence type="ECO:0000255" key="1">
    <source>
        <dbReference type="HAMAP-Rule" id="MF_00270"/>
    </source>
</evidence>
<evidence type="ECO:0000256" key="2">
    <source>
        <dbReference type="SAM" id="MobiDB-lite"/>
    </source>
</evidence>
<evidence type="ECO:0000305" key="3"/>
<keyword id="KW-1185">Reference proteome</keyword>
<keyword id="KW-0687">Ribonucleoprotein</keyword>
<keyword id="KW-0689">Ribosomal protein</keyword>
<keyword id="KW-0694">RNA-binding</keyword>
<keyword id="KW-0699">rRNA-binding</keyword>
<name>RS182_STRAW</name>
<protein>
    <recommendedName>
        <fullName evidence="1">Small ribosomal subunit protein bS18B</fullName>
    </recommendedName>
    <alternativeName>
        <fullName evidence="3">30S ribosomal protein S18 2</fullName>
    </alternativeName>
</protein>
<organism>
    <name type="scientific">Streptomyces avermitilis (strain ATCC 31267 / DSM 46492 / JCM 5070 / NBRC 14893 / NCIMB 12804 / NRRL 8165 / MA-4680)</name>
    <dbReference type="NCBI Taxonomy" id="227882"/>
    <lineage>
        <taxon>Bacteria</taxon>
        <taxon>Bacillati</taxon>
        <taxon>Actinomycetota</taxon>
        <taxon>Actinomycetes</taxon>
        <taxon>Kitasatosporales</taxon>
        <taxon>Streptomycetaceae</taxon>
        <taxon>Streptomyces</taxon>
    </lineage>
</organism>
<reference key="1">
    <citation type="journal article" date="2001" name="Proc. Natl. Acad. Sci. U.S.A.">
        <title>Genome sequence of an industrial microorganism Streptomyces avermitilis: deducing the ability of producing secondary metabolites.</title>
        <authorList>
            <person name="Omura S."/>
            <person name="Ikeda H."/>
            <person name="Ishikawa J."/>
            <person name="Hanamoto A."/>
            <person name="Takahashi C."/>
            <person name="Shinose M."/>
            <person name="Takahashi Y."/>
            <person name="Horikawa H."/>
            <person name="Nakazawa H."/>
            <person name="Osonoe T."/>
            <person name="Kikuchi H."/>
            <person name="Shiba T."/>
            <person name="Sakaki Y."/>
            <person name="Hattori M."/>
        </authorList>
    </citation>
    <scope>NUCLEOTIDE SEQUENCE [LARGE SCALE GENOMIC DNA]</scope>
    <source>
        <strain>ATCC 31267 / DSM 46492 / JCM 5070 / NBRC 14893 / NCIMB 12804 / NRRL 8165 / MA-4680</strain>
    </source>
</reference>
<reference key="2">
    <citation type="journal article" date="2003" name="Nat. Biotechnol.">
        <title>Complete genome sequence and comparative analysis of the industrial microorganism Streptomyces avermitilis.</title>
        <authorList>
            <person name="Ikeda H."/>
            <person name="Ishikawa J."/>
            <person name="Hanamoto A."/>
            <person name="Shinose M."/>
            <person name="Kikuchi H."/>
            <person name="Shiba T."/>
            <person name="Sakaki Y."/>
            <person name="Hattori M."/>
            <person name="Omura S."/>
        </authorList>
    </citation>
    <scope>NUCLEOTIDE SEQUENCE [LARGE SCALE GENOMIC DNA]</scope>
    <source>
        <strain>ATCC 31267 / DSM 46492 / JCM 5070 / NBRC 14893 / NCIMB 12804 / NRRL 8165 / MA-4680</strain>
    </source>
</reference>
<dbReference type="EMBL" id="BA000030">
    <property type="protein sequence ID" value="BAC72358.1"/>
    <property type="molecule type" value="Genomic_DNA"/>
</dbReference>
<dbReference type="SMR" id="Q82EG9"/>
<dbReference type="GeneID" id="41541727"/>
<dbReference type="KEGG" id="sma:SAVERM_4646"/>
<dbReference type="eggNOG" id="COG0238">
    <property type="taxonomic scope" value="Bacteria"/>
</dbReference>
<dbReference type="HOGENOM" id="CLU_148710_1_0_11"/>
<dbReference type="OrthoDB" id="9812008at2"/>
<dbReference type="Proteomes" id="UP000000428">
    <property type="component" value="Chromosome"/>
</dbReference>
<dbReference type="GO" id="GO:0022627">
    <property type="term" value="C:cytosolic small ribosomal subunit"/>
    <property type="evidence" value="ECO:0007669"/>
    <property type="project" value="TreeGrafter"/>
</dbReference>
<dbReference type="GO" id="GO:0070181">
    <property type="term" value="F:small ribosomal subunit rRNA binding"/>
    <property type="evidence" value="ECO:0007669"/>
    <property type="project" value="TreeGrafter"/>
</dbReference>
<dbReference type="GO" id="GO:0003735">
    <property type="term" value="F:structural constituent of ribosome"/>
    <property type="evidence" value="ECO:0007669"/>
    <property type="project" value="InterPro"/>
</dbReference>
<dbReference type="GO" id="GO:0006412">
    <property type="term" value="P:translation"/>
    <property type="evidence" value="ECO:0007669"/>
    <property type="project" value="UniProtKB-UniRule"/>
</dbReference>
<dbReference type="FunFam" id="4.10.640.10:FF:000016">
    <property type="entry name" value="30S ribosomal protein S18"/>
    <property type="match status" value="1"/>
</dbReference>
<dbReference type="Gene3D" id="4.10.640.10">
    <property type="entry name" value="Ribosomal protein S18"/>
    <property type="match status" value="1"/>
</dbReference>
<dbReference type="HAMAP" id="MF_00270">
    <property type="entry name" value="Ribosomal_bS18"/>
    <property type="match status" value="1"/>
</dbReference>
<dbReference type="InterPro" id="IPR001648">
    <property type="entry name" value="Ribosomal_bS18"/>
</dbReference>
<dbReference type="InterPro" id="IPR018275">
    <property type="entry name" value="Ribosomal_bS18_CS"/>
</dbReference>
<dbReference type="InterPro" id="IPR036870">
    <property type="entry name" value="Ribosomal_bS18_sf"/>
</dbReference>
<dbReference type="NCBIfam" id="TIGR00165">
    <property type="entry name" value="S18"/>
    <property type="match status" value="1"/>
</dbReference>
<dbReference type="PANTHER" id="PTHR13479">
    <property type="entry name" value="30S RIBOSOMAL PROTEIN S18"/>
    <property type="match status" value="1"/>
</dbReference>
<dbReference type="PANTHER" id="PTHR13479:SF40">
    <property type="entry name" value="SMALL RIBOSOMAL SUBUNIT PROTEIN BS18M"/>
    <property type="match status" value="1"/>
</dbReference>
<dbReference type="Pfam" id="PF01084">
    <property type="entry name" value="Ribosomal_S18"/>
    <property type="match status" value="1"/>
</dbReference>
<dbReference type="PRINTS" id="PR00974">
    <property type="entry name" value="RIBOSOMALS18"/>
</dbReference>
<dbReference type="SUPFAM" id="SSF46911">
    <property type="entry name" value="Ribosomal protein S18"/>
    <property type="match status" value="1"/>
</dbReference>
<dbReference type="PROSITE" id="PS00057">
    <property type="entry name" value="RIBOSOMAL_S18"/>
    <property type="match status" value="1"/>
</dbReference>